<proteinExistence type="evidence at transcript level"/>
<protein>
    <recommendedName>
        <fullName>Thyrotropin subunit beta</fullName>
    </recommendedName>
    <alternativeName>
        <fullName>Thyroid-stimulating hormone subunit beta</fullName>
        <shortName>TSH-B</shortName>
        <shortName>TSH-beta</shortName>
    </alternativeName>
    <alternativeName>
        <fullName>Thyrotropin beta chain</fullName>
    </alternativeName>
</protein>
<sequence length="138" mass="15666">MTAIYLMSMLFGLACGQAMSFCFPTEYTMHVERKECAYCLTINTTICAGYCMTRDINGKLFLPKYALSQDVCTYRDFMYKTVEIPGCPRHVTPYFSYPVAVSCKCGKCNTDYSDCIHEAIKTNYCTKPQKSYVVGFSI</sequence>
<reference key="1">
    <citation type="submission" date="1996-03" db="EMBL/GenBank/DDBJ databases">
        <authorList>
            <person name="Kania S.A."/>
            <person name="Frank L.A."/>
        </authorList>
    </citation>
    <scope>NUCLEOTIDE SEQUENCE [MRNA]</scope>
    <source>
        <tissue>Pituitary</tissue>
    </source>
</reference>
<dbReference type="EMBL" id="U51644">
    <property type="protein sequence ID" value="AAA97410.1"/>
    <property type="molecule type" value="mRNA"/>
</dbReference>
<dbReference type="RefSeq" id="NP_001003290.1">
    <property type="nucleotide sequence ID" value="NM_001003290.2"/>
</dbReference>
<dbReference type="RefSeq" id="XP_038546391.1">
    <property type="nucleotide sequence ID" value="XM_038690463.1"/>
</dbReference>
<dbReference type="SMR" id="P54828"/>
<dbReference type="FunCoup" id="P54828">
    <property type="interactions" value="60"/>
</dbReference>
<dbReference type="STRING" id="9615.ENSCAFP00000014272"/>
<dbReference type="GlyCosmos" id="P54828">
    <property type="glycosylation" value="1 site, No reported glycans"/>
</dbReference>
<dbReference type="PaxDb" id="9612-ENSCAFP00000014272"/>
<dbReference type="GeneID" id="403973"/>
<dbReference type="KEGG" id="cfa:403973"/>
<dbReference type="CTD" id="7252"/>
<dbReference type="eggNOG" id="ENOG502S2JW">
    <property type="taxonomic scope" value="Eukaryota"/>
</dbReference>
<dbReference type="InParanoid" id="P54828"/>
<dbReference type="OrthoDB" id="8866353at2759"/>
<dbReference type="Proteomes" id="UP000002254">
    <property type="component" value="Unplaced"/>
</dbReference>
<dbReference type="Proteomes" id="UP000694429">
    <property type="component" value="Unplaced"/>
</dbReference>
<dbReference type="Proteomes" id="UP000694542">
    <property type="component" value="Unplaced"/>
</dbReference>
<dbReference type="Proteomes" id="UP000805418">
    <property type="component" value="Unplaced"/>
</dbReference>
<dbReference type="GO" id="GO:0005737">
    <property type="term" value="C:cytoplasm"/>
    <property type="evidence" value="ECO:0000318"/>
    <property type="project" value="GO_Central"/>
</dbReference>
<dbReference type="GO" id="GO:0005615">
    <property type="term" value="C:extracellular space"/>
    <property type="evidence" value="ECO:0000318"/>
    <property type="project" value="GO_Central"/>
</dbReference>
<dbReference type="GO" id="GO:0005179">
    <property type="term" value="F:hormone activity"/>
    <property type="evidence" value="ECO:0007669"/>
    <property type="project" value="UniProtKB-KW"/>
</dbReference>
<dbReference type="GO" id="GO:0007186">
    <property type="term" value="P:G protein-coupled receptor signaling pathway"/>
    <property type="evidence" value="ECO:0000318"/>
    <property type="project" value="GO_Central"/>
</dbReference>
<dbReference type="CDD" id="cd00069">
    <property type="entry name" value="GHB_like"/>
    <property type="match status" value="1"/>
</dbReference>
<dbReference type="FunFam" id="2.10.90.10:FF:000007">
    <property type="entry name" value="Luteinizing hormone beta subunit"/>
    <property type="match status" value="1"/>
</dbReference>
<dbReference type="Gene3D" id="2.10.90.10">
    <property type="entry name" value="Cystine-knot cytokines"/>
    <property type="match status" value="1"/>
</dbReference>
<dbReference type="InterPro" id="IPR029034">
    <property type="entry name" value="Cystine-knot_cytokine"/>
</dbReference>
<dbReference type="InterPro" id="IPR006208">
    <property type="entry name" value="Glyco_hormone_CN"/>
</dbReference>
<dbReference type="InterPro" id="IPR001545">
    <property type="entry name" value="Gonadotropin_bsu"/>
</dbReference>
<dbReference type="InterPro" id="IPR018245">
    <property type="entry name" value="Gonadotropin_bsu_CS"/>
</dbReference>
<dbReference type="PANTHER" id="PTHR11515">
    <property type="entry name" value="GLYCOPROTEIN HORMONE BETA CHAIN"/>
    <property type="match status" value="1"/>
</dbReference>
<dbReference type="PANTHER" id="PTHR11515:SF5">
    <property type="entry name" value="THYROTROPIN SUBUNIT BETA"/>
    <property type="match status" value="1"/>
</dbReference>
<dbReference type="Pfam" id="PF00007">
    <property type="entry name" value="Cys_knot"/>
    <property type="match status" value="1"/>
</dbReference>
<dbReference type="SMART" id="SM00068">
    <property type="entry name" value="GHB"/>
    <property type="match status" value="1"/>
</dbReference>
<dbReference type="SUPFAM" id="SSF57501">
    <property type="entry name" value="Cystine-knot cytokines"/>
    <property type="match status" value="1"/>
</dbReference>
<dbReference type="PROSITE" id="PS00261">
    <property type="entry name" value="GLYCO_HORMONE_BETA_1"/>
    <property type="match status" value="1"/>
</dbReference>
<dbReference type="PROSITE" id="PS00689">
    <property type="entry name" value="GLYCO_HORMONE_BETA_2"/>
    <property type="match status" value="1"/>
</dbReference>
<name>TSHB_CANLF</name>
<feature type="signal peptide" evidence="1">
    <location>
        <begin position="1"/>
        <end position="20"/>
    </location>
</feature>
<feature type="chain" id="PRO_0000011742" description="Thyrotropin subunit beta">
    <location>
        <begin position="21"/>
        <end position="132"/>
    </location>
</feature>
<feature type="propeptide" id="PRO_0000011743" evidence="1">
    <location>
        <begin position="133"/>
        <end position="138"/>
    </location>
</feature>
<feature type="glycosylation site" description="N-linked (GlcNAc...) asparagine" evidence="2">
    <location>
        <position position="43"/>
    </location>
</feature>
<feature type="disulfide bond" evidence="1">
    <location>
        <begin position="22"/>
        <end position="72"/>
    </location>
</feature>
<feature type="disulfide bond" evidence="1">
    <location>
        <begin position="36"/>
        <end position="87"/>
    </location>
</feature>
<feature type="disulfide bond" evidence="1">
    <location>
        <begin position="39"/>
        <end position="125"/>
    </location>
</feature>
<feature type="disulfide bond" evidence="1">
    <location>
        <begin position="47"/>
        <end position="103"/>
    </location>
</feature>
<feature type="disulfide bond" evidence="1">
    <location>
        <begin position="51"/>
        <end position="105"/>
    </location>
</feature>
<feature type="disulfide bond" evidence="1">
    <location>
        <begin position="108"/>
        <end position="115"/>
    </location>
</feature>
<evidence type="ECO:0000250" key="1"/>
<evidence type="ECO:0000255" key="2"/>
<evidence type="ECO:0000305" key="3"/>
<accession>P54828</accession>
<gene>
    <name type="primary">TSHB</name>
</gene>
<organism>
    <name type="scientific">Canis lupus familiaris</name>
    <name type="common">Dog</name>
    <name type="synonym">Canis familiaris</name>
    <dbReference type="NCBI Taxonomy" id="9615"/>
    <lineage>
        <taxon>Eukaryota</taxon>
        <taxon>Metazoa</taxon>
        <taxon>Chordata</taxon>
        <taxon>Craniata</taxon>
        <taxon>Vertebrata</taxon>
        <taxon>Euteleostomi</taxon>
        <taxon>Mammalia</taxon>
        <taxon>Eutheria</taxon>
        <taxon>Laurasiatheria</taxon>
        <taxon>Carnivora</taxon>
        <taxon>Caniformia</taxon>
        <taxon>Canidae</taxon>
        <taxon>Canis</taxon>
    </lineage>
</organism>
<comment type="function">
    <text>Indispensable for the control of thyroid structure and metabolism.</text>
</comment>
<comment type="subunit">
    <text>Heterodimer of a common alpha chain and a unique beta chain which confers biological specificity to thyrotropin, lutropin, follitropin and gonadotropin.</text>
</comment>
<comment type="subcellular location">
    <subcellularLocation>
        <location>Secreted</location>
    </subcellularLocation>
</comment>
<comment type="similarity">
    <text evidence="3">Belongs to the glycoprotein hormones subunit beta family.</text>
</comment>
<keyword id="KW-1015">Disulfide bond</keyword>
<keyword id="KW-0325">Glycoprotein</keyword>
<keyword id="KW-0372">Hormone</keyword>
<keyword id="KW-1185">Reference proteome</keyword>
<keyword id="KW-0964">Secreted</keyword>
<keyword id="KW-0732">Signal</keyword>